<accession>Q3TCV3</accession>
<accession>Q3UV93</accession>
<accession>Q8BJR8</accession>
<accession>Q8BZR8</accession>
<accession>Q8R1Y4</accession>
<evidence type="ECO:0000250" key="1"/>
<evidence type="ECO:0000255" key="2"/>
<evidence type="ECO:0000269" key="3">
    <source>
    </source>
</evidence>
<evidence type="ECO:0000303" key="4">
    <source>
    </source>
</evidence>
<evidence type="ECO:0000303" key="5">
    <source>
    </source>
</evidence>
<evidence type="ECO:0000305" key="6"/>
<feature type="chain" id="PRO_0000335810" description="Gamma-secretase-activating protein">
    <location>
        <begin position="1"/>
        <end position="858"/>
    </location>
</feature>
<feature type="chain" id="PRO_0000403729" description="Gamma-secretase-activating protein 16 kDa C-terminal form" evidence="2">
    <location>
        <begin position="738"/>
        <end position="858"/>
    </location>
</feature>
<feature type="splice variant" id="VSP_033775" description="In isoform 3." evidence="4">
    <original>Y</original>
    <variation>F</variation>
    <location>
        <position position="172"/>
    </location>
</feature>
<feature type="splice variant" id="VSP_033776" description="In isoform 3." evidence="4">
    <location>
        <begin position="173"/>
        <end position="858"/>
    </location>
</feature>
<feature type="splice variant" id="VSP_033777" description="In isoform 2." evidence="5">
    <original>YGLKGY</original>
    <variation>SPAPRG</variation>
    <location>
        <begin position="521"/>
        <end position="526"/>
    </location>
</feature>
<feature type="splice variant" id="VSP_033778" description="In isoform 2." evidence="5">
    <location>
        <begin position="527"/>
        <end position="858"/>
    </location>
</feature>
<feature type="sequence conflict" description="In Ref. 1; BAC37858." evidence="6" ref="1">
    <original>Q</original>
    <variation>R</variation>
    <location>
        <position position="392"/>
    </location>
</feature>
<sequence length="858" mass="98694">MALRLVTHFDVLEDVLPSLLTQAATTDEGDRAGVLETTYGSLRVLNIERNGNIIYTYKDNKGNAVFGLYDCQTRQNEHLYTFEKDMQAVSCSVNSERTVLAASFIQYTTEGVKNDLQPGSKCLTLLVEIHPVNNVKVLKAVDSCVWVQFLYPQAESHLLPQNHLLLISEEKYIERFHIQITREDGDRVVIRNSSHLPRDRLAEDFVWAQWDLSEQRLYYIELKESRSILKCIQFRADESFNLMFEMPLDITLTGLRFKLVNFGYDYRQDREKLCNQPSLCIFTNHTGSLCMCYSPKSDSREEITYSVFYLHKGYRKIFTAAPGSADSQVTNGADSQVTDGIAFLNLGYFVAVYSPGHFLHLLNIQHPDLVCHSLFLTGNNKIAAVLPPSPLQSLPGSLVLDCYSGKVYRVTLDQSYLLRFLWNAHLDCERMAALHCILSCSQDPGFPEEQIIQWISEHVSACHSFDLIQEFLIASSYWSVYAELDDMGMLLQYSSVLTWNTEIPGIKFTTEELPLPLMKVYGLKGYWAKLNSNLEYIKYTKPHLHYHNSVVRREWHNLISEERTGKRRSTMYVRNILENAMKVIASMETRTLEPRLIPFLQEEDRHQRLLMGLMVSELRDHLLRHLQGVEKKKIEQMVLDYISKLLDLIWCLLETSWRKHSMHPLVLHLNSHCSAADFEVFHLMTRILDAASSLCLPLPPGFHSLHTILGVHCLPLYSLLHYIDNGVLLLTETAVTRLMKDLDNSEKNEQLKFSIIVRLPPLIGQKVCRLWDHPMSSNIISRNHVARLLKNYRKEPRNSMIDKSSFPVEFLPLNYFIEILMGLESSNQALYGFEGHDNVDAEFVEEAALKHTTMLLGL</sequence>
<keyword id="KW-0025">Alternative splicing</keyword>
<keyword id="KW-0333">Golgi apparatus</keyword>
<keyword id="KW-1185">Reference proteome</keyword>
<protein>
    <recommendedName>
        <fullName>Gamma-secretase-activating protein</fullName>
        <shortName>GSAP</shortName>
    </recommendedName>
    <alternativeName>
        <fullName>Protein pigeon homolog</fullName>
    </alternativeName>
    <component>
        <recommendedName>
            <fullName>Gamma-secretase-activating protein 16 kDa C-terminal form</fullName>
            <shortName>GSAP-16K</shortName>
        </recommendedName>
    </component>
</protein>
<proteinExistence type="evidence at transcript level"/>
<comment type="function">
    <text evidence="3">Regulator of gamma-secretase activity, which specifically activates the production of amyloid-beta protein (amyloid-beta protein 40 and amyloid-beta protein 42), without affecting the cleavage of other gamma-secretase targets such has Notch. The gamma-secretase complex is an endoprotease complex that catalyzes the intramembrane cleavage of integral membrane proteins such as Notch receptors and APP (amyloid-beta precursor protein). Specifically promotes the gamma-cleavage of APP CTF-alpha (also named APP-CTF) by the gamma-secretase complex to generate amyloid-beta, while it reduces the epsilon-cleavage of APP CTF-alpha, leading to a low production of AICD.</text>
</comment>
<comment type="subunit">
    <text evidence="1">Interacts with APP; specifically interacts with the CTF-alpha product of APP. Interacts with the gamma-secretase complex (By similarity).</text>
</comment>
<comment type="subcellular location">
    <subcellularLocation>
        <location evidence="1">Golgi apparatus</location>
        <location evidence="1">trans-Golgi network</location>
    </subcellularLocation>
</comment>
<comment type="alternative products">
    <event type="alternative splicing"/>
    <isoform>
        <id>Q3TCV3-1</id>
        <name>1</name>
        <sequence type="displayed"/>
    </isoform>
    <isoform>
        <id>Q3TCV3-2</id>
        <name>2</name>
        <sequence type="described" ref="VSP_033777 VSP_033778"/>
    </isoform>
    <isoform>
        <id>Q3TCV3-3</id>
        <name>3</name>
        <sequence type="described" ref="VSP_033775 VSP_033776"/>
    </isoform>
</comment>
<comment type="PTM">
    <text evidence="1">The protein is first synthesized as a holoprotein form of 98 kDa and rapidly processed into the gamma-secretase-activating protein 16 kDa C-terminal form, which constitutes the predominant form.</text>
</comment>
<comment type="similarity">
    <text evidence="6">Belongs to the GSAP family.</text>
</comment>
<comment type="sequence caution" evidence="6">
    <conflict type="erroneous initiation">
        <sequence resource="EMBL-CDS" id="AAH22737"/>
    </conflict>
    <text>Extended N-terminus.</text>
</comment>
<comment type="sequence caution" evidence="6">
    <conflict type="frameshift">
        <sequence resource="EMBL-CDS" id="BAC28433"/>
    </conflict>
</comment>
<dbReference type="EMBL" id="AK033694">
    <property type="protein sequence ID" value="BAC28433.1"/>
    <property type="status" value="ALT_FRAME"/>
    <property type="molecule type" value="mRNA"/>
</dbReference>
<dbReference type="EMBL" id="AK080244">
    <property type="protein sequence ID" value="BAC37858.1"/>
    <property type="molecule type" value="mRNA"/>
</dbReference>
<dbReference type="EMBL" id="AK137494">
    <property type="protein sequence ID" value="BAE23378.1"/>
    <property type="molecule type" value="mRNA"/>
</dbReference>
<dbReference type="EMBL" id="AK170515">
    <property type="protein sequence ID" value="BAE41852.1"/>
    <property type="molecule type" value="mRNA"/>
</dbReference>
<dbReference type="EMBL" id="BC022737">
    <property type="protein sequence ID" value="AAH22737.1"/>
    <property type="status" value="ALT_INIT"/>
    <property type="molecule type" value="mRNA"/>
</dbReference>
<dbReference type="CCDS" id="CCDS39021.1">
    <molecule id="Q3TCV3-1"/>
</dbReference>
<dbReference type="RefSeq" id="NP_001346806.1">
    <molecule id="Q3TCV3-2"/>
    <property type="nucleotide sequence ID" value="NM_001359877.2"/>
</dbReference>
<dbReference type="RefSeq" id="NP_780646.2">
    <molecule id="Q3TCV3-1"/>
    <property type="nucleotide sequence ID" value="NM_175437.4"/>
</dbReference>
<dbReference type="BioGRID" id="229299">
    <property type="interactions" value="1"/>
</dbReference>
<dbReference type="DIP" id="DIP-59239N"/>
<dbReference type="FunCoup" id="Q3TCV3">
    <property type="interactions" value="479"/>
</dbReference>
<dbReference type="IntAct" id="Q3TCV3">
    <property type="interactions" value="3"/>
</dbReference>
<dbReference type="STRING" id="10090.ENSMUSP00000043679"/>
<dbReference type="iPTMnet" id="Q3TCV3"/>
<dbReference type="PhosphoSitePlus" id="Q3TCV3"/>
<dbReference type="PaxDb" id="10090-ENSMUSP00000043679"/>
<dbReference type="ProteomicsDB" id="271339">
    <molecule id="Q3TCV3-1"/>
</dbReference>
<dbReference type="ProteomicsDB" id="271340">
    <molecule id="Q3TCV3-2"/>
</dbReference>
<dbReference type="ProteomicsDB" id="271341">
    <molecule id="Q3TCV3-3"/>
</dbReference>
<dbReference type="Antibodypedia" id="15032">
    <property type="antibodies" value="191 antibodies from 21 providers"/>
</dbReference>
<dbReference type="DNASU" id="212167"/>
<dbReference type="Ensembl" id="ENSMUST00000036031.13">
    <molecule id="Q3TCV3-1"/>
    <property type="protein sequence ID" value="ENSMUSP00000043679.9"/>
    <property type="gene ID" value="ENSMUSG00000039934.13"/>
</dbReference>
<dbReference type="Ensembl" id="ENSMUST00000198071.5">
    <molecule id="Q3TCV3-3"/>
    <property type="protein sequence ID" value="ENSMUSP00000142407.2"/>
    <property type="gene ID" value="ENSMUSG00000039934.13"/>
</dbReference>
<dbReference type="GeneID" id="212167"/>
<dbReference type="KEGG" id="mmu:212167"/>
<dbReference type="UCSC" id="uc008woi.1">
    <molecule id="Q3TCV3-2"/>
    <property type="organism name" value="mouse"/>
</dbReference>
<dbReference type="UCSC" id="uc008woj.1">
    <molecule id="Q3TCV3-1"/>
    <property type="organism name" value="mouse"/>
</dbReference>
<dbReference type="AGR" id="MGI:2442259"/>
<dbReference type="CTD" id="54103"/>
<dbReference type="MGI" id="MGI:2442259">
    <property type="gene designation" value="Gsap"/>
</dbReference>
<dbReference type="VEuPathDB" id="HostDB:ENSMUSG00000039934"/>
<dbReference type="eggNOG" id="ENOG502QWQK">
    <property type="taxonomic scope" value="Eukaryota"/>
</dbReference>
<dbReference type="GeneTree" id="ENSGT00390000012875"/>
<dbReference type="HOGENOM" id="CLU_008601_0_0_1"/>
<dbReference type="InParanoid" id="Q3TCV3"/>
<dbReference type="OMA" id="CANQSRN"/>
<dbReference type="OrthoDB" id="9997853at2759"/>
<dbReference type="PhylomeDB" id="Q3TCV3"/>
<dbReference type="TreeFam" id="TF323853"/>
<dbReference type="BioGRID-ORCS" id="212167">
    <property type="hits" value="3 hits in 79 CRISPR screens"/>
</dbReference>
<dbReference type="ChiTaRS" id="Gsap">
    <property type="organism name" value="mouse"/>
</dbReference>
<dbReference type="PRO" id="PR:Q3TCV3"/>
<dbReference type="Proteomes" id="UP000000589">
    <property type="component" value="Chromosome 5"/>
</dbReference>
<dbReference type="RNAct" id="Q3TCV3">
    <property type="molecule type" value="protein"/>
</dbReference>
<dbReference type="Bgee" id="ENSMUSG00000039934">
    <property type="expression patterns" value="Expressed in lumbar dorsal root ganglion and 129 other cell types or tissues"/>
</dbReference>
<dbReference type="ExpressionAtlas" id="Q3TCV3">
    <property type="expression patterns" value="baseline and differential"/>
</dbReference>
<dbReference type="GO" id="GO:0005802">
    <property type="term" value="C:trans-Golgi network"/>
    <property type="evidence" value="ECO:0000250"/>
    <property type="project" value="UniProtKB"/>
</dbReference>
<dbReference type="GO" id="GO:0001540">
    <property type="term" value="F:amyloid-beta binding"/>
    <property type="evidence" value="ECO:0000250"/>
    <property type="project" value="UniProtKB"/>
</dbReference>
<dbReference type="GO" id="GO:1902004">
    <property type="term" value="P:positive regulation of amyloid-beta formation"/>
    <property type="evidence" value="ECO:0000314"/>
    <property type="project" value="UniProtKB"/>
</dbReference>
<dbReference type="GO" id="GO:0030162">
    <property type="term" value="P:regulation of proteolysis"/>
    <property type="evidence" value="ECO:0000250"/>
    <property type="project" value="UniProtKB"/>
</dbReference>
<dbReference type="CDD" id="cd23105">
    <property type="entry name" value="GSAP"/>
    <property type="match status" value="1"/>
</dbReference>
<dbReference type="InterPro" id="IPR028010">
    <property type="entry name" value="GSAP_C_dom"/>
</dbReference>
<dbReference type="InterPro" id="IPR026172">
    <property type="entry name" value="GSAP_fam"/>
</dbReference>
<dbReference type="PANTHER" id="PTHR13630">
    <property type="entry name" value="GAMMA-SECRETASE-ACTIVATING PROTEIN"/>
    <property type="match status" value="1"/>
</dbReference>
<dbReference type="PANTHER" id="PTHR13630:SF1">
    <property type="entry name" value="GAMMA-SECRETASE-ACTIVATING PROTEIN"/>
    <property type="match status" value="1"/>
</dbReference>
<dbReference type="Pfam" id="PF14959">
    <property type="entry name" value="GSAP-16"/>
    <property type="match status" value="1"/>
</dbReference>
<organism>
    <name type="scientific">Mus musculus</name>
    <name type="common">Mouse</name>
    <dbReference type="NCBI Taxonomy" id="10090"/>
    <lineage>
        <taxon>Eukaryota</taxon>
        <taxon>Metazoa</taxon>
        <taxon>Chordata</taxon>
        <taxon>Craniata</taxon>
        <taxon>Vertebrata</taxon>
        <taxon>Euteleostomi</taxon>
        <taxon>Mammalia</taxon>
        <taxon>Eutheria</taxon>
        <taxon>Euarchontoglires</taxon>
        <taxon>Glires</taxon>
        <taxon>Rodentia</taxon>
        <taxon>Myomorpha</taxon>
        <taxon>Muroidea</taxon>
        <taxon>Muridae</taxon>
        <taxon>Murinae</taxon>
        <taxon>Mus</taxon>
        <taxon>Mus</taxon>
    </lineage>
</organism>
<gene>
    <name type="primary">Gsap</name>
    <name type="synonym">Pion</name>
</gene>
<reference key="1">
    <citation type="journal article" date="2005" name="Science">
        <title>The transcriptional landscape of the mammalian genome.</title>
        <authorList>
            <person name="Carninci P."/>
            <person name="Kasukawa T."/>
            <person name="Katayama S."/>
            <person name="Gough J."/>
            <person name="Frith M.C."/>
            <person name="Maeda N."/>
            <person name="Oyama R."/>
            <person name="Ravasi T."/>
            <person name="Lenhard B."/>
            <person name="Wells C."/>
            <person name="Kodzius R."/>
            <person name="Shimokawa K."/>
            <person name="Bajic V.B."/>
            <person name="Brenner S.E."/>
            <person name="Batalov S."/>
            <person name="Forrest A.R."/>
            <person name="Zavolan M."/>
            <person name="Davis M.J."/>
            <person name="Wilming L.G."/>
            <person name="Aidinis V."/>
            <person name="Allen J.E."/>
            <person name="Ambesi-Impiombato A."/>
            <person name="Apweiler R."/>
            <person name="Aturaliya R.N."/>
            <person name="Bailey T.L."/>
            <person name="Bansal M."/>
            <person name="Baxter L."/>
            <person name="Beisel K.W."/>
            <person name="Bersano T."/>
            <person name="Bono H."/>
            <person name="Chalk A.M."/>
            <person name="Chiu K.P."/>
            <person name="Choudhary V."/>
            <person name="Christoffels A."/>
            <person name="Clutterbuck D.R."/>
            <person name="Crowe M.L."/>
            <person name="Dalla E."/>
            <person name="Dalrymple B.P."/>
            <person name="de Bono B."/>
            <person name="Della Gatta G."/>
            <person name="di Bernardo D."/>
            <person name="Down T."/>
            <person name="Engstrom P."/>
            <person name="Fagiolini M."/>
            <person name="Faulkner G."/>
            <person name="Fletcher C.F."/>
            <person name="Fukushima T."/>
            <person name="Furuno M."/>
            <person name="Futaki S."/>
            <person name="Gariboldi M."/>
            <person name="Georgii-Hemming P."/>
            <person name="Gingeras T.R."/>
            <person name="Gojobori T."/>
            <person name="Green R.E."/>
            <person name="Gustincich S."/>
            <person name="Harbers M."/>
            <person name="Hayashi Y."/>
            <person name="Hensch T.K."/>
            <person name="Hirokawa N."/>
            <person name="Hill D."/>
            <person name="Huminiecki L."/>
            <person name="Iacono M."/>
            <person name="Ikeo K."/>
            <person name="Iwama A."/>
            <person name="Ishikawa T."/>
            <person name="Jakt M."/>
            <person name="Kanapin A."/>
            <person name="Katoh M."/>
            <person name="Kawasawa Y."/>
            <person name="Kelso J."/>
            <person name="Kitamura H."/>
            <person name="Kitano H."/>
            <person name="Kollias G."/>
            <person name="Krishnan S.P."/>
            <person name="Kruger A."/>
            <person name="Kummerfeld S.K."/>
            <person name="Kurochkin I.V."/>
            <person name="Lareau L.F."/>
            <person name="Lazarevic D."/>
            <person name="Lipovich L."/>
            <person name="Liu J."/>
            <person name="Liuni S."/>
            <person name="McWilliam S."/>
            <person name="Madan Babu M."/>
            <person name="Madera M."/>
            <person name="Marchionni L."/>
            <person name="Matsuda H."/>
            <person name="Matsuzawa S."/>
            <person name="Miki H."/>
            <person name="Mignone F."/>
            <person name="Miyake S."/>
            <person name="Morris K."/>
            <person name="Mottagui-Tabar S."/>
            <person name="Mulder N."/>
            <person name="Nakano N."/>
            <person name="Nakauchi H."/>
            <person name="Ng P."/>
            <person name="Nilsson R."/>
            <person name="Nishiguchi S."/>
            <person name="Nishikawa S."/>
            <person name="Nori F."/>
            <person name="Ohara O."/>
            <person name="Okazaki Y."/>
            <person name="Orlando V."/>
            <person name="Pang K.C."/>
            <person name="Pavan W.J."/>
            <person name="Pavesi G."/>
            <person name="Pesole G."/>
            <person name="Petrovsky N."/>
            <person name="Piazza S."/>
            <person name="Reed J."/>
            <person name="Reid J.F."/>
            <person name="Ring B.Z."/>
            <person name="Ringwald M."/>
            <person name="Rost B."/>
            <person name="Ruan Y."/>
            <person name="Salzberg S.L."/>
            <person name="Sandelin A."/>
            <person name="Schneider C."/>
            <person name="Schoenbach C."/>
            <person name="Sekiguchi K."/>
            <person name="Semple C.A."/>
            <person name="Seno S."/>
            <person name="Sessa L."/>
            <person name="Sheng Y."/>
            <person name="Shibata Y."/>
            <person name="Shimada H."/>
            <person name="Shimada K."/>
            <person name="Silva D."/>
            <person name="Sinclair B."/>
            <person name="Sperling S."/>
            <person name="Stupka E."/>
            <person name="Sugiura K."/>
            <person name="Sultana R."/>
            <person name="Takenaka Y."/>
            <person name="Taki K."/>
            <person name="Tammoja K."/>
            <person name="Tan S.L."/>
            <person name="Tang S."/>
            <person name="Taylor M.S."/>
            <person name="Tegner J."/>
            <person name="Teichmann S.A."/>
            <person name="Ueda H.R."/>
            <person name="van Nimwegen E."/>
            <person name="Verardo R."/>
            <person name="Wei C.L."/>
            <person name="Yagi K."/>
            <person name="Yamanishi H."/>
            <person name="Zabarovsky E."/>
            <person name="Zhu S."/>
            <person name="Zimmer A."/>
            <person name="Hide W."/>
            <person name="Bult C."/>
            <person name="Grimmond S.M."/>
            <person name="Teasdale R.D."/>
            <person name="Liu E.T."/>
            <person name="Brusic V."/>
            <person name="Quackenbush J."/>
            <person name="Wahlestedt C."/>
            <person name="Mattick J.S."/>
            <person name="Hume D.A."/>
            <person name="Kai C."/>
            <person name="Sasaki D."/>
            <person name="Tomaru Y."/>
            <person name="Fukuda S."/>
            <person name="Kanamori-Katayama M."/>
            <person name="Suzuki M."/>
            <person name="Aoki J."/>
            <person name="Arakawa T."/>
            <person name="Iida J."/>
            <person name="Imamura K."/>
            <person name="Itoh M."/>
            <person name="Kato T."/>
            <person name="Kawaji H."/>
            <person name="Kawagashira N."/>
            <person name="Kawashima T."/>
            <person name="Kojima M."/>
            <person name="Kondo S."/>
            <person name="Konno H."/>
            <person name="Nakano K."/>
            <person name="Ninomiya N."/>
            <person name="Nishio T."/>
            <person name="Okada M."/>
            <person name="Plessy C."/>
            <person name="Shibata K."/>
            <person name="Shiraki T."/>
            <person name="Suzuki S."/>
            <person name="Tagami M."/>
            <person name="Waki K."/>
            <person name="Watahiki A."/>
            <person name="Okamura-Oho Y."/>
            <person name="Suzuki H."/>
            <person name="Kawai J."/>
            <person name="Hayashizaki Y."/>
        </authorList>
    </citation>
    <scope>NUCLEOTIDE SEQUENCE [LARGE SCALE MRNA] (ISOFORMS 1 AND 2)</scope>
    <source>
        <strain>C57BL/6J</strain>
        <strain>NOD</strain>
        <tissue>Aorta</tissue>
        <tissue>Bone</tissue>
        <tissue>Cecum</tissue>
        <tissue>Vein</tissue>
    </source>
</reference>
<reference key="2">
    <citation type="journal article" date="2004" name="Genome Res.">
        <title>The status, quality, and expansion of the NIH full-length cDNA project: the Mammalian Gene Collection (MGC).</title>
        <authorList>
            <consortium name="The MGC Project Team"/>
        </authorList>
    </citation>
    <scope>NUCLEOTIDE SEQUENCE [LARGE SCALE MRNA] (ISOFORM 3)</scope>
    <source>
        <tissue>Eye</tissue>
    </source>
</reference>
<reference key="3">
    <citation type="journal article" date="2010" name="Nature">
        <title>Gamma-secretase activating protein is a therapeutic target for Alzheimer's disease.</title>
        <authorList>
            <person name="He G."/>
            <person name="Luo W."/>
            <person name="Li P."/>
            <person name="Remmers C."/>
            <person name="Netzer W.J."/>
            <person name="Hendrick J."/>
            <person name="Bettayeb K."/>
            <person name="Flajolet M."/>
            <person name="Gorelick F."/>
            <person name="Wennogle L.P."/>
            <person name="Greengard P."/>
        </authorList>
    </citation>
    <scope>FUNCTION</scope>
</reference>
<name>GSAP_MOUSE</name>